<evidence type="ECO:0000269" key="1">
    <source>
    </source>
</evidence>
<evidence type="ECO:0000305" key="2"/>
<name>TOG3B_AGEAP</name>
<feature type="chain" id="PRO_0000087607" description="Omega-agatoxin-Aa3b">
    <location>
        <begin position="1"/>
        <end position="76"/>
    </location>
</feature>
<feature type="disulfide bond" evidence="2">
    <location>
        <begin position="2"/>
        <end position="19"/>
    </location>
</feature>
<feature type="disulfide bond" evidence="2">
    <location>
        <begin position="9"/>
        <end position="25"/>
    </location>
</feature>
<feature type="disulfide bond" evidence="2">
    <location>
        <begin position="16"/>
        <end position="52"/>
    </location>
</feature>
<feature type="disulfide bond" evidence="2">
    <location>
        <begin position="18"/>
        <end position="40"/>
    </location>
</feature>
<feature type="disulfide bond" evidence="2">
    <location>
        <begin position="27"/>
        <end position="38"/>
    </location>
</feature>
<feature type="disulfide bond" evidence="2">
    <location>
        <begin position="59"/>
        <end position="67"/>
    </location>
</feature>
<feature type="sequence variant" evidence="1">
    <original>N</original>
    <variation>S</variation>
    <location>
        <position position="29"/>
    </location>
</feature>
<feature type="sequence variant" evidence="1">
    <original>K</original>
    <variation>R</variation>
    <location>
        <position position="35"/>
    </location>
</feature>
<comment type="function">
    <text evidence="1">Omega-agatoxins are antagonists of voltage-gated calcium channels. This toxin blocks calcium channels in insect central neurons but not at peripheral neuromuscular junctions. In vertebrates, it is broadly active against all high-threshold Cav1/CACNA1 channels and Cav2.2/CACNA1B channels.</text>
</comment>
<comment type="subcellular location">
    <subcellularLocation>
        <location>Secreted</location>
    </subcellularLocation>
</comment>
<comment type="tissue specificity">
    <text>Expressed by the venom gland.</text>
</comment>
<comment type="domain">
    <text evidence="2">The presence of a 'disulfide through disulfide knot' structurally defines this protein as a knottin.</text>
</comment>
<comment type="miscellaneous">
    <text>Negative results: does not inhibit Cav3 (T-type) channels.</text>
</comment>
<comment type="similarity">
    <text evidence="2">Belongs to the neurotoxin 04 (omega-agtx) family. 03 (type II/III omega-agtx) subfamily.</text>
</comment>
<sequence length="76" mass="8620">SCIDFGGDCDGEKDDCQCCRSNGYCSCYNLFGYLKSGCKCEVGTSAEFRRICRRKAKQCYNSDPDKCVSVYKPKRR</sequence>
<proteinExistence type="evidence at protein level"/>
<reference key="1">
    <citation type="journal article" date="1994" name="Biochemistry">
        <title>Type III omega-agatoxins: a family of probes for similar binding sites on L- and N-type calcium channels.</title>
        <authorList>
            <person name="Ertel E.A."/>
            <person name="Warren V.A."/>
            <person name="Adams M.E."/>
            <person name="Griffin P.R."/>
            <person name="Cohen C.J."/>
            <person name="Smith M.M."/>
        </authorList>
    </citation>
    <scope>PROTEIN SEQUENCE</scope>
    <scope>VARIANTS SER-29 AND ARG-35</scope>
    <scope>FUNCTION</scope>
    <source>
        <tissue>Venom</tissue>
    </source>
</reference>
<organism>
    <name type="scientific">Agelenopsis aperta</name>
    <name type="common">North American funnel-web spider</name>
    <name type="synonym">Agelenopsis gertschi</name>
    <dbReference type="NCBI Taxonomy" id="6908"/>
    <lineage>
        <taxon>Eukaryota</taxon>
        <taxon>Metazoa</taxon>
        <taxon>Ecdysozoa</taxon>
        <taxon>Arthropoda</taxon>
        <taxon>Chelicerata</taxon>
        <taxon>Arachnida</taxon>
        <taxon>Araneae</taxon>
        <taxon>Araneomorphae</taxon>
        <taxon>Entelegynae</taxon>
        <taxon>Agelenidae</taxon>
        <taxon>Agelenopsis</taxon>
    </lineage>
</organism>
<dbReference type="PIR" id="B54252">
    <property type="entry name" value="B54252"/>
</dbReference>
<dbReference type="PIR" id="C54252">
    <property type="entry name" value="C54252"/>
</dbReference>
<dbReference type="PIR" id="D54252">
    <property type="entry name" value="D54252"/>
</dbReference>
<dbReference type="SMR" id="P81744"/>
<dbReference type="ArachnoServer" id="AS000179">
    <property type="toxin name" value="omega-agatoxin-Aa3b"/>
</dbReference>
<dbReference type="GO" id="GO:0005576">
    <property type="term" value="C:extracellular region"/>
    <property type="evidence" value="ECO:0007669"/>
    <property type="project" value="UniProtKB-SubCell"/>
</dbReference>
<dbReference type="GO" id="GO:0044231">
    <property type="term" value="C:host cell presynaptic membrane"/>
    <property type="evidence" value="ECO:0007669"/>
    <property type="project" value="UniProtKB-KW"/>
</dbReference>
<dbReference type="GO" id="GO:0005246">
    <property type="term" value="F:calcium channel regulator activity"/>
    <property type="evidence" value="ECO:0007669"/>
    <property type="project" value="UniProtKB-KW"/>
</dbReference>
<dbReference type="GO" id="GO:0090729">
    <property type="term" value="F:toxin activity"/>
    <property type="evidence" value="ECO:0007669"/>
    <property type="project" value="UniProtKB-KW"/>
</dbReference>
<dbReference type="InterPro" id="IPR005853">
    <property type="entry name" value="Omega-agatoxin_II/III_CS"/>
</dbReference>
<dbReference type="InterPro" id="IPR013605">
    <property type="entry name" value="Toxin_34"/>
</dbReference>
<dbReference type="Pfam" id="PF08396">
    <property type="entry name" value="Toxin_34"/>
    <property type="match status" value="1"/>
</dbReference>
<dbReference type="PROSITE" id="PS60023">
    <property type="entry name" value="OMEGA_AGA_II_III"/>
    <property type="match status" value="1"/>
</dbReference>
<accession>P81744</accession>
<keyword id="KW-0108">Calcium channel impairing toxin</keyword>
<keyword id="KW-0903">Direct protein sequencing</keyword>
<keyword id="KW-1015">Disulfide bond</keyword>
<keyword id="KW-0872">Ion channel impairing toxin</keyword>
<keyword id="KW-0960">Knottin</keyword>
<keyword id="KW-0528">Neurotoxin</keyword>
<keyword id="KW-0638">Presynaptic neurotoxin</keyword>
<keyword id="KW-0964">Secreted</keyword>
<keyword id="KW-0800">Toxin</keyword>
<keyword id="KW-1218">Voltage-gated calcium channel impairing toxin</keyword>
<protein>
    <recommendedName>
        <fullName>Omega-agatoxin-Aa3b</fullName>
        <shortName>Omega-AGTX-Aa3b</shortName>
    </recommendedName>
    <alternativeName>
        <fullName>Omega-agatoxin IIIB</fullName>
        <shortName>Omega-Aga-IIIB</shortName>
    </alternativeName>
    <alternativeName>
        <fullName>Omega-agatoxin-3B</fullName>
    </alternativeName>
</protein>